<sequence length="226" mass="25286">MMTNLFSVFDPSTTILNLSLNWLSTFLGLLLIPFSFWLLPNRFQVVWNNILLTLHKEFKTLLGPSGHNGSTLMFISLFSLIMFNNFLGLFPYIFTSTSHLTLTLALAFPLWLSFMLYGWINHTQHMFAHLVPQGTPPVLMPFMVCIETISNVIRPGTLAVRLTANMIAGHLLLTLLGNTGPMTTNYIILSLILTTQIALLVLESAVAIIQSYVFAVLSTLYSSEVN</sequence>
<protein>
    <recommendedName>
        <fullName>ATP synthase subunit a</fullName>
    </recommendedName>
    <alternativeName>
        <fullName>F-ATPase protein 6</fullName>
    </alternativeName>
</protein>
<accession>P33507</accession>
<feature type="chain" id="PRO_0000082086" description="ATP synthase subunit a">
    <location>
        <begin position="1"/>
        <end position="226"/>
    </location>
</feature>
<feature type="transmembrane region" description="Helical" evidence="1">
    <location>
        <begin position="20"/>
        <end position="40"/>
    </location>
</feature>
<feature type="transmembrane region" description="Helical" evidence="1">
    <location>
        <begin position="74"/>
        <end position="94"/>
    </location>
</feature>
<feature type="transmembrane region" description="Helical" evidence="1">
    <location>
        <begin position="100"/>
        <end position="120"/>
    </location>
</feature>
<feature type="transmembrane region" description="Helical" evidence="1">
    <location>
        <begin position="158"/>
        <end position="180"/>
    </location>
</feature>
<feature type="transmembrane region" description="Helical" evidence="1">
    <location>
        <begin position="197"/>
        <end position="217"/>
    </location>
</feature>
<name>ATP6_ANOQU</name>
<evidence type="ECO:0000255" key="1"/>
<evidence type="ECO:0000305" key="2"/>
<keyword id="KW-0066">ATP synthesis</keyword>
<keyword id="KW-0138">CF(0)</keyword>
<keyword id="KW-0375">Hydrogen ion transport</keyword>
<keyword id="KW-0406">Ion transport</keyword>
<keyword id="KW-0472">Membrane</keyword>
<keyword id="KW-0496">Mitochondrion</keyword>
<keyword id="KW-0999">Mitochondrion inner membrane</keyword>
<keyword id="KW-0812">Transmembrane</keyword>
<keyword id="KW-1133">Transmembrane helix</keyword>
<keyword id="KW-0813">Transport</keyword>
<comment type="function">
    <text>Mitochondrial membrane ATP synthase (F(1)F(0) ATP synthase or Complex V) produces ATP from ADP in the presence of a proton gradient across the membrane which is generated by electron transport complexes of the respiratory chain. F-type ATPases consist of two structural domains, F(1) - containing the extramembraneous catalytic core and F(0) - containing the membrane proton channel, linked together by a central stalk and a peripheral stalk. During catalysis, ATP synthesis in the catalytic domain of F(1) is coupled via a rotary mechanism of the central stalk subunits to proton translocation. Key component of the proton channel; it may play a direct role in the translocation of protons across the membrane.</text>
</comment>
<comment type="subunit">
    <text>F-type ATPases have 2 components, CF(1) - the catalytic core - and CF(0) - the membrane proton channel. CF(1) has five subunits: alpha(3), beta(3), gamma(1), delta(1), epsilon(1). CF(0) has three main subunits: a, b and c.</text>
</comment>
<comment type="subcellular location">
    <subcellularLocation>
        <location>Mitochondrion inner membrane</location>
        <topology>Multi-pass membrane protein</topology>
    </subcellularLocation>
</comment>
<comment type="similarity">
    <text evidence="2">Belongs to the ATPase A chain family.</text>
</comment>
<reference key="1">
    <citation type="journal article" date="1990" name="Arch. Insect Biochem. Physiol.">
        <title>Cloning of the mitochondrial genome of Anopheles quadrimaculatus.</title>
        <authorList>
            <person name="Cockburn A.F."/>
            <person name="Mitchell S.E."/>
            <person name="Seawright J.A."/>
        </authorList>
    </citation>
    <scope>NUCLEOTIDE SEQUENCE [GENOMIC DNA]</scope>
    <source>
        <strain>Orlando</strain>
    </source>
</reference>
<geneLocation type="mitochondrion"/>
<dbReference type="EMBL" id="L04272">
    <property type="protein sequence ID" value="AAA93544.1"/>
    <property type="molecule type" value="Genomic_DNA"/>
</dbReference>
<dbReference type="SMR" id="P33507"/>
<dbReference type="GO" id="GO:0005743">
    <property type="term" value="C:mitochondrial inner membrane"/>
    <property type="evidence" value="ECO:0007669"/>
    <property type="project" value="UniProtKB-SubCell"/>
</dbReference>
<dbReference type="GO" id="GO:0045259">
    <property type="term" value="C:proton-transporting ATP synthase complex"/>
    <property type="evidence" value="ECO:0007669"/>
    <property type="project" value="UniProtKB-KW"/>
</dbReference>
<dbReference type="GO" id="GO:0046933">
    <property type="term" value="F:proton-transporting ATP synthase activity, rotational mechanism"/>
    <property type="evidence" value="ECO:0007669"/>
    <property type="project" value="TreeGrafter"/>
</dbReference>
<dbReference type="CDD" id="cd00310">
    <property type="entry name" value="ATP-synt_Fo_a_6"/>
    <property type="match status" value="1"/>
</dbReference>
<dbReference type="FunFam" id="1.20.120.220:FF:000008">
    <property type="entry name" value="ATP synthase subunit a"/>
    <property type="match status" value="1"/>
</dbReference>
<dbReference type="Gene3D" id="1.20.120.220">
    <property type="entry name" value="ATP synthase, F0 complex, subunit A"/>
    <property type="match status" value="1"/>
</dbReference>
<dbReference type="InterPro" id="IPR000568">
    <property type="entry name" value="ATP_synth_F0_asu"/>
</dbReference>
<dbReference type="InterPro" id="IPR023011">
    <property type="entry name" value="ATP_synth_F0_asu_AS"/>
</dbReference>
<dbReference type="InterPro" id="IPR045083">
    <property type="entry name" value="ATP_synth_F0_asu_bact/mt"/>
</dbReference>
<dbReference type="InterPro" id="IPR035908">
    <property type="entry name" value="F0_ATP_A_sf"/>
</dbReference>
<dbReference type="NCBIfam" id="TIGR01131">
    <property type="entry name" value="ATP_synt_6_or_A"/>
    <property type="match status" value="1"/>
</dbReference>
<dbReference type="PANTHER" id="PTHR11410">
    <property type="entry name" value="ATP SYNTHASE SUBUNIT A"/>
    <property type="match status" value="1"/>
</dbReference>
<dbReference type="PANTHER" id="PTHR11410:SF0">
    <property type="entry name" value="ATP SYNTHASE SUBUNIT A"/>
    <property type="match status" value="1"/>
</dbReference>
<dbReference type="Pfam" id="PF00119">
    <property type="entry name" value="ATP-synt_A"/>
    <property type="match status" value="1"/>
</dbReference>
<dbReference type="PRINTS" id="PR00123">
    <property type="entry name" value="ATPASEA"/>
</dbReference>
<dbReference type="SUPFAM" id="SSF81336">
    <property type="entry name" value="F1F0 ATP synthase subunit A"/>
    <property type="match status" value="1"/>
</dbReference>
<dbReference type="PROSITE" id="PS00449">
    <property type="entry name" value="ATPASE_A"/>
    <property type="match status" value="1"/>
</dbReference>
<organism>
    <name type="scientific">Anopheles quadrimaculatus</name>
    <name type="common">Common malaria mosquito</name>
    <dbReference type="NCBI Taxonomy" id="7166"/>
    <lineage>
        <taxon>Eukaryota</taxon>
        <taxon>Metazoa</taxon>
        <taxon>Ecdysozoa</taxon>
        <taxon>Arthropoda</taxon>
        <taxon>Hexapoda</taxon>
        <taxon>Insecta</taxon>
        <taxon>Pterygota</taxon>
        <taxon>Neoptera</taxon>
        <taxon>Endopterygota</taxon>
        <taxon>Diptera</taxon>
        <taxon>Nematocera</taxon>
        <taxon>Culicoidea</taxon>
        <taxon>Culicidae</taxon>
        <taxon>Anophelinae</taxon>
        <taxon>Anopheles</taxon>
    </lineage>
</organism>
<gene>
    <name type="primary">ATP6</name>
</gene>
<proteinExistence type="inferred from homology"/>